<keyword id="KW-0002">3D-structure</keyword>
<keyword id="KW-0903">Direct protein sequencing</keyword>
<keyword id="KW-1017">Isopeptide bond</keyword>
<keyword id="KW-0501">Molybdenum cofactor biosynthesis</keyword>
<keyword id="KW-0547">Nucleotide-binding</keyword>
<keyword id="KW-0597">Phosphoprotein</keyword>
<keyword id="KW-1185">Reference proteome</keyword>
<comment type="function">
    <text evidence="4">Involved in sulfur transfer in the conversion of molybdopterin precursor Z to molybdopterin.</text>
</comment>
<comment type="pathway">
    <text>Cofactor biosynthesis; molybdopterin biosynthesis.</text>
</comment>
<comment type="subunit">
    <text evidence="1 3">Heterotetramer of 2 MoaD subunits and 2 MoaE subunits. Forms a stable heterotetrameric complex of 2 MoaD and 2 MoeB during adenylation of MoaD by MoeB. During catalysis MoaD shuttles between the two heterotetrameric complexes.</text>
</comment>
<comment type="interaction">
    <interactant intactId="EBI-554366">
        <id>P30748</id>
    </interactant>
    <interactant intactId="EBI-554376">
        <id>P30749</id>
        <label>moaE</label>
    </interactant>
    <organismsDiffer>false</organismsDiffer>
    <experiments>8</experiments>
</comment>
<comment type="interaction">
    <interactant intactId="EBI-554366">
        <id>P30748</id>
    </interactant>
    <interactant intactId="EBI-543702">
        <id>P0A7K2</id>
        <label>rplL</label>
    </interactant>
    <organismsDiffer>false</organismsDiffer>
    <experiments>2</experiments>
</comment>
<comment type="induction">
    <text>By anaerobiosis, repressed by the molybdenum cofactor.</text>
</comment>
<comment type="PTM">
    <text evidence="3">C-terminal thiocarboxylation occurs in 2 steps, it is first acyl-adenylated (-COAMP) by MoeB, then thiocarboxylated (-COSH) by IscS.</text>
</comment>
<comment type="mass spectrometry" mass="8773.6" error="0.2" method="Electrospray" evidence="5">
    <text>The measured mass is that of the thiolated protein.</text>
</comment>
<comment type="mass spectrometry" mass="8757.0" error="1.0" method="Electrospray" evidence="5"/>
<comment type="mass spectrometry" mass="8744.0" method="Electrospray" evidence="2"/>
<comment type="mass spectrometry" mass="8744.0" method="API" evidence="1"/>
<comment type="mass spectrometry" mass="8760.0" method="API" evidence="1">
    <text>The measured mass is that of the thiolated protein.</text>
</comment>
<comment type="miscellaneous">
    <text>The cross-link is not seen in all structures of the MoaE-MoaD complex.</text>
</comment>
<comment type="similarity">
    <text evidence="6">Belongs to the MoaD family.</text>
</comment>
<evidence type="ECO:0000269" key="1">
    <source>
    </source>
</evidence>
<evidence type="ECO:0000269" key="2">
    <source>
    </source>
</evidence>
<evidence type="ECO:0000269" key="3">
    <source>
    </source>
</evidence>
<evidence type="ECO:0000269" key="4">
    <source>
    </source>
</evidence>
<evidence type="ECO:0000269" key="5">
    <source>
    </source>
</evidence>
<evidence type="ECO:0000305" key="6"/>
<evidence type="ECO:0007829" key="7">
    <source>
        <dbReference type="PDB" id="1FM0"/>
    </source>
</evidence>
<evidence type="ECO:0007829" key="8">
    <source>
        <dbReference type="PDB" id="1JWB"/>
    </source>
</evidence>
<feature type="chain" id="PRO_0000209131" description="Molybdopterin synthase sulfur carrier subunit">
    <location>
        <begin position="1"/>
        <end position="81"/>
    </location>
</feature>
<feature type="modified residue" description="1-thioglycine; alternate" evidence="3">
    <location>
        <position position="81"/>
    </location>
</feature>
<feature type="modified residue" description="Glycyl adenylate; alternate" evidence="2">
    <location>
        <position position="81"/>
    </location>
</feature>
<feature type="cross-link" description="Glycyl lysine isopeptide (Gly-Lys) (interchain with K-119 in MoaE)">
    <location>
        <position position="81"/>
    </location>
</feature>
<feature type="sequence conflict" description="In Ref. 5; AA sequence." evidence="6" ref="5">
    <original>Q</original>
    <variation>E</variation>
    <location>
        <position position="9"/>
    </location>
</feature>
<feature type="sequence conflict" description="In Ref. 1; CAA49864." evidence="6" ref="1">
    <original>A</original>
    <variation>R</variation>
    <location>
        <position position="45"/>
    </location>
</feature>
<feature type="strand" evidence="7">
    <location>
        <begin position="2"/>
        <end position="6"/>
    </location>
</feature>
<feature type="helix" evidence="7">
    <location>
        <begin position="8"/>
        <end position="14"/>
    </location>
</feature>
<feature type="strand" evidence="7">
    <location>
        <begin position="17"/>
        <end position="21"/>
    </location>
</feature>
<feature type="helix" evidence="7">
    <location>
        <begin position="28"/>
        <end position="36"/>
    </location>
</feature>
<feature type="helix" evidence="7">
    <location>
        <begin position="40"/>
        <end position="46"/>
    </location>
</feature>
<feature type="strand" evidence="7">
    <location>
        <begin position="52"/>
        <end position="55"/>
    </location>
</feature>
<feature type="strand" evidence="8">
    <location>
        <begin position="58"/>
        <end position="60"/>
    </location>
</feature>
<feature type="strand" evidence="7">
    <location>
        <begin position="71"/>
        <end position="75"/>
    </location>
</feature>
<proteinExistence type="evidence at protein level"/>
<name>MOAD_ECOLI</name>
<organism>
    <name type="scientific">Escherichia coli (strain K12)</name>
    <dbReference type="NCBI Taxonomy" id="83333"/>
    <lineage>
        <taxon>Bacteria</taxon>
        <taxon>Pseudomonadati</taxon>
        <taxon>Pseudomonadota</taxon>
        <taxon>Gammaproteobacteria</taxon>
        <taxon>Enterobacterales</taxon>
        <taxon>Enterobacteriaceae</taxon>
        <taxon>Escherichia</taxon>
    </lineage>
</organism>
<sequence length="81" mass="8758">MIKVLFFAQVRELVGTDATEVAADFPTVEALRQHMAAQSDRWALALEDGKLLAAVNQTLVSFDHPLTDGDEVAFFPPVTGG</sequence>
<gene>
    <name type="primary">moaD</name>
    <name type="synonym">chlA4</name>
    <name type="synonym">chlM</name>
    <name type="ordered locus">b0784</name>
    <name type="ordered locus">JW0767</name>
</gene>
<dbReference type="EMBL" id="X70420">
    <property type="protein sequence ID" value="CAA49864.1"/>
    <property type="molecule type" value="Genomic_DNA"/>
</dbReference>
<dbReference type="EMBL" id="U00096">
    <property type="protein sequence ID" value="AAC73871.1"/>
    <property type="molecule type" value="Genomic_DNA"/>
</dbReference>
<dbReference type="EMBL" id="AP009048">
    <property type="protein sequence ID" value="BAA35442.1"/>
    <property type="molecule type" value="Genomic_DNA"/>
</dbReference>
<dbReference type="PIR" id="H64814">
    <property type="entry name" value="H64814"/>
</dbReference>
<dbReference type="RefSeq" id="NP_415305.1">
    <property type="nucleotide sequence ID" value="NC_000913.3"/>
</dbReference>
<dbReference type="RefSeq" id="WP_000598619.1">
    <property type="nucleotide sequence ID" value="NZ_STEB01000028.1"/>
</dbReference>
<dbReference type="PDB" id="1FM0">
    <property type="method" value="X-ray"/>
    <property type="resolution" value="1.45 A"/>
    <property type="chains" value="D=1-81"/>
</dbReference>
<dbReference type="PDB" id="1FMA">
    <property type="method" value="X-ray"/>
    <property type="resolution" value="1.58 A"/>
    <property type="chains" value="D=1-81"/>
</dbReference>
<dbReference type="PDB" id="1JW9">
    <property type="method" value="X-ray"/>
    <property type="resolution" value="1.70 A"/>
    <property type="chains" value="D=1-81"/>
</dbReference>
<dbReference type="PDB" id="1JWA">
    <property type="method" value="X-ray"/>
    <property type="resolution" value="2.90 A"/>
    <property type="chains" value="D=1-81"/>
</dbReference>
<dbReference type="PDB" id="1JWB">
    <property type="method" value="X-ray"/>
    <property type="resolution" value="2.10 A"/>
    <property type="chains" value="D=1-81"/>
</dbReference>
<dbReference type="PDB" id="1NVI">
    <property type="method" value="X-ray"/>
    <property type="resolution" value="1.90 A"/>
    <property type="chains" value="D=1-81"/>
</dbReference>
<dbReference type="PDB" id="3BII">
    <property type="method" value="X-ray"/>
    <property type="resolution" value="2.50 A"/>
    <property type="chains" value="D=1-81"/>
</dbReference>
<dbReference type="PDBsum" id="1FM0"/>
<dbReference type="PDBsum" id="1FMA"/>
<dbReference type="PDBsum" id="1JW9"/>
<dbReference type="PDBsum" id="1JWA"/>
<dbReference type="PDBsum" id="1JWB"/>
<dbReference type="PDBsum" id="1NVI"/>
<dbReference type="PDBsum" id="3BII"/>
<dbReference type="SMR" id="P30748"/>
<dbReference type="BioGRID" id="4262177">
    <property type="interactions" value="24"/>
</dbReference>
<dbReference type="BioGRID" id="849772">
    <property type="interactions" value="3"/>
</dbReference>
<dbReference type="ComplexPortal" id="CPX-1968">
    <property type="entry name" value="Molybdopterin-synthase adenylyltransferase complex"/>
</dbReference>
<dbReference type="ComplexPortal" id="CPX-1970">
    <property type="entry name" value="Molybdopterin synthase complex"/>
</dbReference>
<dbReference type="DIP" id="DIP-10231N"/>
<dbReference type="FunCoup" id="P30748">
    <property type="interactions" value="169"/>
</dbReference>
<dbReference type="IntAct" id="P30748">
    <property type="interactions" value="16"/>
</dbReference>
<dbReference type="STRING" id="511145.b0784"/>
<dbReference type="jPOST" id="P30748"/>
<dbReference type="PaxDb" id="511145-b0784"/>
<dbReference type="EnsemblBacteria" id="AAC73871">
    <property type="protein sequence ID" value="AAC73871"/>
    <property type="gene ID" value="b0784"/>
</dbReference>
<dbReference type="GeneID" id="945398"/>
<dbReference type="KEGG" id="ecj:JW0767"/>
<dbReference type="KEGG" id="eco:b0784"/>
<dbReference type="KEGG" id="ecoc:C3026_04970"/>
<dbReference type="PATRIC" id="fig|1411691.4.peg.1494"/>
<dbReference type="EchoBASE" id="EB1554"/>
<dbReference type="eggNOG" id="COG1977">
    <property type="taxonomic scope" value="Bacteria"/>
</dbReference>
<dbReference type="HOGENOM" id="CLU_114601_4_0_6"/>
<dbReference type="InParanoid" id="P30748"/>
<dbReference type="OMA" id="RMACNHV"/>
<dbReference type="OrthoDB" id="9801945at2"/>
<dbReference type="PhylomeDB" id="P30748"/>
<dbReference type="BioCyc" id="EcoCyc:EG11597-MONOMER"/>
<dbReference type="BioCyc" id="MetaCyc:EG11597-MONOMER"/>
<dbReference type="UniPathway" id="UPA00344"/>
<dbReference type="EvolutionaryTrace" id="P30748"/>
<dbReference type="PRO" id="PR:P30748"/>
<dbReference type="Proteomes" id="UP000000625">
    <property type="component" value="Chromosome"/>
</dbReference>
<dbReference type="GO" id="GO:0005829">
    <property type="term" value="C:cytosol"/>
    <property type="evidence" value="ECO:0000314"/>
    <property type="project" value="EcoCyc"/>
</dbReference>
<dbReference type="GO" id="GO:1990133">
    <property type="term" value="C:molybdopterin adenylyltransferase complex"/>
    <property type="evidence" value="ECO:0000353"/>
    <property type="project" value="ComplexPortal"/>
</dbReference>
<dbReference type="GO" id="GO:1990140">
    <property type="term" value="C:molybdopterin synthase complex"/>
    <property type="evidence" value="ECO:0000353"/>
    <property type="project" value="ComplexPortal"/>
</dbReference>
<dbReference type="GO" id="GO:0000166">
    <property type="term" value="F:nucleotide binding"/>
    <property type="evidence" value="ECO:0007669"/>
    <property type="project" value="UniProtKB-KW"/>
</dbReference>
<dbReference type="GO" id="GO:0006777">
    <property type="term" value="P:Mo-molybdopterin cofactor biosynthetic process"/>
    <property type="evidence" value="ECO:0000314"/>
    <property type="project" value="ComplexPortal"/>
</dbReference>
<dbReference type="CDD" id="cd00754">
    <property type="entry name" value="Ubl_MoaD"/>
    <property type="match status" value="1"/>
</dbReference>
<dbReference type="FunFam" id="3.10.20.30:FF:000010">
    <property type="entry name" value="Molybdopterin synthase sulfur carrier subunit"/>
    <property type="match status" value="1"/>
</dbReference>
<dbReference type="Gene3D" id="3.10.20.30">
    <property type="match status" value="1"/>
</dbReference>
<dbReference type="InterPro" id="IPR012675">
    <property type="entry name" value="Beta-grasp_dom_sf"/>
</dbReference>
<dbReference type="InterPro" id="IPR044672">
    <property type="entry name" value="MOCS2A"/>
</dbReference>
<dbReference type="InterPro" id="IPR016155">
    <property type="entry name" value="Mopterin_synth/thiamin_S_b"/>
</dbReference>
<dbReference type="InterPro" id="IPR003749">
    <property type="entry name" value="ThiS/MoaD-like"/>
</dbReference>
<dbReference type="NCBIfam" id="TIGR01682">
    <property type="entry name" value="moaD"/>
    <property type="match status" value="1"/>
</dbReference>
<dbReference type="NCBIfam" id="NF008347">
    <property type="entry name" value="PRK11130.1"/>
    <property type="match status" value="1"/>
</dbReference>
<dbReference type="PANTHER" id="PTHR33359">
    <property type="entry name" value="MOLYBDOPTERIN SYNTHASE SULFUR CARRIER SUBUNIT"/>
    <property type="match status" value="1"/>
</dbReference>
<dbReference type="PANTHER" id="PTHR33359:SF1">
    <property type="entry name" value="MOLYBDOPTERIN SYNTHASE SULFUR CARRIER SUBUNIT"/>
    <property type="match status" value="1"/>
</dbReference>
<dbReference type="Pfam" id="PF02597">
    <property type="entry name" value="ThiS"/>
    <property type="match status" value="1"/>
</dbReference>
<dbReference type="SUPFAM" id="SSF54285">
    <property type="entry name" value="MoaD/ThiS"/>
    <property type="match status" value="1"/>
</dbReference>
<accession>P30748</accession>
<accession>P77422</accession>
<reference key="1">
    <citation type="journal article" date="1993" name="Mol. Microbiol.">
        <title>Molecular genetic analysis of the moa operon of Escherichia coli K-12 required for molybdenum cofactor biosynthesis.</title>
        <authorList>
            <person name="Rivers S.L."/>
            <person name="McNairn E."/>
            <person name="Blasco F."/>
            <person name="Giordano G."/>
            <person name="Boxer D.H."/>
        </authorList>
    </citation>
    <scope>NUCLEOTIDE SEQUENCE [GENOMIC DNA]</scope>
    <source>
        <strain>K12 / MC4100 / ATCC 35695 / DSM 6574</strain>
    </source>
</reference>
<reference key="2">
    <citation type="journal article" date="1996" name="DNA Res.">
        <title>A 718-kb DNA sequence of the Escherichia coli K-12 genome corresponding to the 12.7-28.0 min region on the linkage map.</title>
        <authorList>
            <person name="Oshima T."/>
            <person name="Aiba H."/>
            <person name="Baba T."/>
            <person name="Fujita K."/>
            <person name="Hayashi K."/>
            <person name="Honjo A."/>
            <person name="Ikemoto K."/>
            <person name="Inada T."/>
            <person name="Itoh T."/>
            <person name="Kajihara M."/>
            <person name="Kanai K."/>
            <person name="Kashimoto K."/>
            <person name="Kimura S."/>
            <person name="Kitagawa M."/>
            <person name="Makino K."/>
            <person name="Masuda S."/>
            <person name="Miki T."/>
            <person name="Mizobuchi K."/>
            <person name="Mori H."/>
            <person name="Motomura K."/>
            <person name="Nakamura Y."/>
            <person name="Nashimoto H."/>
            <person name="Nishio Y."/>
            <person name="Saito N."/>
            <person name="Sampei G."/>
            <person name="Seki Y."/>
            <person name="Tagami H."/>
            <person name="Takemoto K."/>
            <person name="Wada C."/>
            <person name="Yamamoto Y."/>
            <person name="Yano M."/>
            <person name="Horiuchi T."/>
        </authorList>
    </citation>
    <scope>NUCLEOTIDE SEQUENCE [LARGE SCALE GENOMIC DNA]</scope>
    <source>
        <strain>K12 / W3110 / ATCC 27325 / DSM 5911</strain>
    </source>
</reference>
<reference key="3">
    <citation type="journal article" date="1997" name="Science">
        <title>The complete genome sequence of Escherichia coli K-12.</title>
        <authorList>
            <person name="Blattner F.R."/>
            <person name="Plunkett G. III"/>
            <person name="Bloch C.A."/>
            <person name="Perna N.T."/>
            <person name="Burland V."/>
            <person name="Riley M."/>
            <person name="Collado-Vides J."/>
            <person name="Glasner J.D."/>
            <person name="Rode C.K."/>
            <person name="Mayhew G.F."/>
            <person name="Gregor J."/>
            <person name="Davis N.W."/>
            <person name="Kirkpatrick H.A."/>
            <person name="Goeden M.A."/>
            <person name="Rose D.J."/>
            <person name="Mau B."/>
            <person name="Shao Y."/>
        </authorList>
    </citation>
    <scope>NUCLEOTIDE SEQUENCE [LARGE SCALE GENOMIC DNA]</scope>
    <source>
        <strain>K12 / MG1655 / ATCC 47076</strain>
    </source>
</reference>
<reference key="4">
    <citation type="journal article" date="2006" name="Mol. Syst. Biol.">
        <title>Highly accurate genome sequences of Escherichia coli K-12 strains MG1655 and W3110.</title>
        <authorList>
            <person name="Hayashi K."/>
            <person name="Morooka N."/>
            <person name="Yamamoto Y."/>
            <person name="Fujita K."/>
            <person name="Isono K."/>
            <person name="Choi S."/>
            <person name="Ohtsubo E."/>
            <person name="Baba T."/>
            <person name="Wanner B.L."/>
            <person name="Mori H."/>
            <person name="Horiuchi T."/>
        </authorList>
    </citation>
    <scope>NUCLEOTIDE SEQUENCE [LARGE SCALE GENOMIC DNA]</scope>
    <source>
        <strain>K12 / W3110 / ATCC 27325 / DSM 5911</strain>
    </source>
</reference>
<reference key="5">
    <citation type="journal article" date="1993" name="J. Biol. Chem.">
        <title>The biosynthesis of molybdopterin in Escherichia coli. Purification and characterization of the converting factor.</title>
        <authorList>
            <person name="Pitterle D.M."/>
            <person name="Rajagopalan K.V."/>
        </authorList>
    </citation>
    <scope>PROTEIN SEQUENCE OF 1-15</scope>
    <scope>CHARACTERIZATION</scope>
    <scope>MASS SPECTROMETRY</scope>
    <scope>IDENTIFICATION OF THIOCARBOXYLATE</scope>
</reference>
<reference key="6">
    <citation type="journal article" date="2001" name="J. Biol. Chem.">
        <title>Characterization of Escherichia coli MoeB and its involvement in the activation of molybdopterin synthase for the biosynthesis of the molybdenum cofactor.</title>
        <authorList>
            <person name="Leimkuehler S."/>
            <person name="Wuebbens M.M."/>
            <person name="Rajagopalan K.V."/>
        </authorList>
    </citation>
    <scope>AMPYLATION AT GLY-81</scope>
    <scope>INTERACTION WITH MOEB</scope>
    <scope>MASS SPECTROMETRY</scope>
    <source>
        <strain>K12 / DH5-alpha</strain>
    </source>
</reference>
<reference key="7">
    <citation type="journal article" date="2007" name="Biochemistry">
        <title>Role of the C-terminal Gly-Gly motif of Escherichia coli MoaD, a molybdenum cofactor biosynthesis protein with a ubiquitin fold.</title>
        <authorList>
            <person name="Schmitz J."/>
            <person name="Wuebbens M.M."/>
            <person name="Rajagopalan K.V."/>
            <person name="Leimkuehler S."/>
        </authorList>
    </citation>
    <scope>FUNCTION</scope>
</reference>
<reference key="8">
    <citation type="journal article" date="2010" name="J. Biol. Chem.">
        <title>IscS functions as a primary sulfur-donating enzyme by interacting specifically with MoeB and MoaD in the biosynthesis of molybdopterin in Escherichia coli.</title>
        <authorList>
            <person name="Zhang W."/>
            <person name="Urban A."/>
            <person name="Mihara H."/>
            <person name="Leimkuehler S."/>
            <person name="Kurihara T."/>
            <person name="Esaki N."/>
        </authorList>
    </citation>
    <scope>IDENTIFICATION OF ISCS AS SULFUR DONOR</scope>
    <scope>INTERACTION WITH ISCS</scope>
</reference>
<reference key="9">
    <citation type="journal article" date="2001" name="Nat. Struct. Biol.">
        <title>Crystal structure of molybdopterin synthase and its evolutionary relationship to ubiquitin activation.</title>
        <authorList>
            <person name="Rudolph M.J."/>
            <person name="Wuebbens M.M."/>
            <person name="Rajagopalan K.V."/>
            <person name="Schindelin H."/>
        </authorList>
    </citation>
    <scope>X-RAY CRYSTALLOGRAPHY (1.45 ANGSTROMS) IN COMPLEXES WITH MOAE</scope>
    <scope>CROSS-LINKING TO MOAE</scope>
    <scope>MASS SPECTROMETRY</scope>
    <scope>SUBUNIT</scope>
</reference>
<reference key="10">
    <citation type="journal article" date="2001" name="Nature">
        <title>Mechanism of ubiquitin activation revealed by the structure of a bacterial MoeB-MoaD complex.</title>
        <authorList>
            <person name="Lake M.W."/>
            <person name="Wuebbens M.M."/>
            <person name="Rajagopalan K.V."/>
            <person name="Schindelin H."/>
        </authorList>
    </citation>
    <scope>X-RAY CRYSTALLOGRAPHY (1.7 ANGSTROMS) IN COMPLEXES WITH MOEB; ZINC; ATP AND IN AN ADENYLATE FORM</scope>
    <scope>COVALENT BINDING OF AMP</scope>
</reference>
<reference key="11">
    <citation type="journal article" date="2003" name="J. Biol. Chem.">
        <title>Structural studies of molybdopterin synthase provide insights into its catalytic mechanism.</title>
        <authorList>
            <person name="Rudolph M.J."/>
            <person name="Wuebbens M.M."/>
            <person name="Turque O."/>
            <person name="Rajagopalan K.V."/>
            <person name="Schindelin H."/>
        </authorList>
    </citation>
    <scope>X-RAY CRYSTALLOGRAPHY (1.9 ANGSTROMS) OF THIOCARBOXYLATE FORM IN COMPLEX WITH MOAE</scope>
    <scope>THIOCARBOXYLATION AT GLY-81</scope>
    <scope>REACTION MECHANISM</scope>
</reference>
<protein>
    <recommendedName>
        <fullName>Molybdopterin synthase sulfur carrier subunit</fullName>
    </recommendedName>
    <alternativeName>
        <fullName>MPT synthase subunit 1</fullName>
    </alternativeName>
    <alternativeName>
        <fullName>Molybdenum cofactor biosynthesis protein D</fullName>
    </alternativeName>
    <alternativeName>
        <fullName>Molybdopterin-converting factor small subunit</fullName>
    </alternativeName>
    <alternativeName>
        <fullName>Molybdopterin-converting factor subunit 1</fullName>
    </alternativeName>
    <alternativeName>
        <fullName>Sulfur carrier protein MoaD</fullName>
    </alternativeName>
</protein>